<gene>
    <name type="primary">asdII</name>
</gene>
<reference key="1">
    <citation type="submission" date="1994-10" db="EMBL/GenBank/DDBJ databases">
        <authorList>
            <person name="Whitehead T.R."/>
        </authorList>
    </citation>
    <scope>NUCLEOTIDE SEQUENCE [GENOMIC DNA]</scope>
    <source>
        <strain>V975</strain>
    </source>
</reference>
<organism>
    <name type="scientific">Bacteroides ovatus</name>
    <dbReference type="NCBI Taxonomy" id="28116"/>
    <lineage>
        <taxon>Bacteria</taxon>
        <taxon>Pseudomonadati</taxon>
        <taxon>Bacteroidota</taxon>
        <taxon>Bacteroidia</taxon>
        <taxon>Bacteroidales</taxon>
        <taxon>Bacteroidaceae</taxon>
        <taxon>Bacteroides</taxon>
    </lineage>
</organism>
<proteinExistence type="inferred from homology"/>
<feature type="chain" id="PRO_0000057703" description="Intracellular exo-alpha-L-arabinofuranosidase">
    <location>
        <begin position="1"/>
        <end position="514"/>
    </location>
</feature>
<feature type="active site" description="Proton donor/acceptor" evidence="2">
    <location>
        <position position="195"/>
    </location>
</feature>
<feature type="active site" description="Nucleophile" evidence="2">
    <location>
        <position position="317"/>
    </location>
</feature>
<feature type="binding site" evidence="2">
    <location>
        <position position="47"/>
    </location>
    <ligand>
        <name>alpha-L-arabinofuranose</name>
        <dbReference type="ChEBI" id="CHEBI:28772"/>
    </ligand>
</feature>
<feature type="binding site" evidence="2">
    <location>
        <position position="194"/>
    </location>
    <ligand>
        <name>alpha-L-arabinofuranose</name>
        <dbReference type="ChEBI" id="CHEBI:28772"/>
    </ligand>
</feature>
<feature type="binding site" evidence="2">
    <location>
        <position position="261"/>
    </location>
    <ligand>
        <name>alpha-L-arabinofuranose</name>
        <dbReference type="ChEBI" id="CHEBI:28772"/>
    </ligand>
</feature>
<feature type="binding site" description="covalent" evidence="2">
    <location>
        <position position="317"/>
    </location>
    <ligand>
        <name>alpha-L-arabinofuranose</name>
        <dbReference type="ChEBI" id="CHEBI:28772"/>
    </ligand>
</feature>
<feature type="binding site" evidence="2">
    <location>
        <position position="366"/>
    </location>
    <ligand>
        <name>alpha-L-arabinofuranose</name>
        <dbReference type="ChEBI" id="CHEBI:28772"/>
    </ligand>
</feature>
<feature type="site" description="Important for substrate recognition" evidence="2">
    <location>
        <position position="321"/>
    </location>
</feature>
<feature type="site" description="Important for substrate recognition" evidence="2">
    <location>
        <position position="366"/>
    </location>
</feature>
<accession>Q59219</accession>
<evidence type="ECO:0000250" key="1"/>
<evidence type="ECO:0000250" key="2">
    <source>
        <dbReference type="UniProtKB" id="Q9XBQ3"/>
    </source>
</evidence>
<evidence type="ECO:0000305" key="3"/>
<comment type="function">
    <text evidence="1">Involved in the degradation of arabinan and is a key enzyme in the complete degradation of the plant cell wall. Catalyzes the cleavage of terminal alpha-L-arabinofuranosyl residues in different hemicellulosic homopolysaccharides (branched and debranched arabinans) and heteropolysaccharides (arabinoxylans) (By similarity).</text>
</comment>
<comment type="catalytic activity">
    <reaction>
        <text>Hydrolysis of terminal non-reducing alpha-L-arabinofuranoside residues in alpha-L-arabinosides.</text>
        <dbReference type="EC" id="3.2.1.55"/>
    </reaction>
</comment>
<comment type="pathway">
    <text>Glycan metabolism; L-arabinan degradation.</text>
</comment>
<comment type="subunit">
    <text evidence="1">Homohexamer; trimer of dimers.</text>
</comment>
<comment type="subcellular location">
    <subcellularLocation>
        <location evidence="1">Cytoplasm</location>
    </subcellularLocation>
</comment>
<comment type="similarity">
    <text evidence="3">Belongs to the glycosyl hydrolase 51 family.</text>
</comment>
<sequence length="514" mass="57979">MKAKLLVSTAFLAASVSLSAQKSATITVHADQGKEIIPKEIYGQFAEHLGSCIYGGLWVGENSDIPNIKGYRTDVFNALKDLSVPVLRWPGGCFADEYHWMDGIGPKENRPKMVNNNWGGTIEDNSFGTHEFLNLCEMLGCEPYVSGNVGSGTVEELAKWVEYMTSDGDSPMANLRRKNGRDKAWKLKYLGVGNESWGCGGSMRPEYYADLYRRYSTYCRNYDGNRLFKIASGASDYDYKWTDVLMNRVGHRMDGLSLHYYTVTGWSGSKGSATQFNKDDYYWTMGKCLEVEDVLKKHCTIMDKYDKDKKIALLLDEWGTWWDEEPGTIKGHLYQQNTLRDAFVASLSLDVFHKYTDRLKMANIAQIVNVLQSMILTKDKEMVLTPTYYVFKMYKVHQDATYLPIDLTCEKMSVRDNRTVPMVSATASKNKDGVIHISLSNVDADEAQEITINLGDTKAKKAIGEILTASKLTDYNSFEKPNIVKPAPFKEVKINKGTMKVKLPAKSIVTLELQ</sequence>
<keyword id="KW-0119">Carbohydrate metabolism</keyword>
<keyword id="KW-0963">Cytoplasm</keyword>
<keyword id="KW-0326">Glycosidase</keyword>
<keyword id="KW-0378">Hydrolase</keyword>
<name>IABF_BACOV</name>
<dbReference type="EC" id="3.2.1.55"/>
<dbReference type="EMBL" id="U15179">
    <property type="protein sequence ID" value="AAA50393.1"/>
    <property type="molecule type" value="Genomic_DNA"/>
</dbReference>
<dbReference type="RefSeq" id="WP_004297450.1">
    <property type="nucleotide sequence ID" value="NZ_UAQF01000004.1"/>
</dbReference>
<dbReference type="SMR" id="Q59219"/>
<dbReference type="STRING" id="28116.Bovatus_00205"/>
<dbReference type="CAZy" id="GH51">
    <property type="family name" value="Glycoside Hydrolase Family 51"/>
</dbReference>
<dbReference type="UniPathway" id="UPA00667"/>
<dbReference type="GO" id="GO:0005737">
    <property type="term" value="C:cytoplasm"/>
    <property type="evidence" value="ECO:0007669"/>
    <property type="project" value="UniProtKB-SubCell"/>
</dbReference>
<dbReference type="GO" id="GO:0046556">
    <property type="term" value="F:alpha-L-arabinofuranosidase activity"/>
    <property type="evidence" value="ECO:0007669"/>
    <property type="project" value="UniProtKB-EC"/>
</dbReference>
<dbReference type="GO" id="GO:0031222">
    <property type="term" value="P:arabinan catabolic process"/>
    <property type="evidence" value="ECO:0007669"/>
    <property type="project" value="UniProtKB-UniPathway"/>
</dbReference>
<dbReference type="GO" id="GO:0046373">
    <property type="term" value="P:L-arabinose metabolic process"/>
    <property type="evidence" value="ECO:0007669"/>
    <property type="project" value="InterPro"/>
</dbReference>
<dbReference type="Gene3D" id="3.20.20.80">
    <property type="entry name" value="Glycosidases"/>
    <property type="match status" value="1"/>
</dbReference>
<dbReference type="Gene3D" id="2.60.40.1180">
    <property type="entry name" value="Golgi alpha-mannosidase II"/>
    <property type="match status" value="1"/>
</dbReference>
<dbReference type="InterPro" id="IPR010720">
    <property type="entry name" value="Alpha-L-AF_C"/>
</dbReference>
<dbReference type="InterPro" id="IPR013780">
    <property type="entry name" value="Glyco_hydro_b"/>
</dbReference>
<dbReference type="InterPro" id="IPR017853">
    <property type="entry name" value="Glycoside_hydrolase_SF"/>
</dbReference>
<dbReference type="PANTHER" id="PTHR43576">
    <property type="entry name" value="ALPHA-L-ARABINOFURANOSIDASE C-RELATED"/>
    <property type="match status" value="1"/>
</dbReference>
<dbReference type="PANTHER" id="PTHR43576:SF2">
    <property type="entry name" value="INTRACELLULAR EXO-ALPHA-L-ARABINOFURANOSIDASE 2"/>
    <property type="match status" value="1"/>
</dbReference>
<dbReference type="Pfam" id="PF06964">
    <property type="entry name" value="Alpha-L-AF_C"/>
    <property type="match status" value="1"/>
</dbReference>
<dbReference type="SMART" id="SM00813">
    <property type="entry name" value="Alpha-L-AF_C"/>
    <property type="match status" value="1"/>
</dbReference>
<dbReference type="SUPFAM" id="SSF51445">
    <property type="entry name" value="(Trans)glycosidases"/>
    <property type="match status" value="1"/>
</dbReference>
<dbReference type="SUPFAM" id="SSF51011">
    <property type="entry name" value="Glycosyl hydrolase domain"/>
    <property type="match status" value="1"/>
</dbReference>
<protein>
    <recommendedName>
        <fullName>Intracellular exo-alpha-L-arabinofuranosidase</fullName>
        <shortName>ABF</shortName>
        <ecNumber>3.2.1.55</ecNumber>
    </recommendedName>
    <alternativeName>
        <fullName>Intracellular arabinan exo-alpha-L-arabinosidase</fullName>
        <shortName>Arabinosidase</shortName>
    </alternativeName>
</protein>